<comment type="function">
    <text evidence="1">Catalyzes the formation of 5-methyl-uridine at position 1939 (m5U1939) in 23S rRNA.</text>
</comment>
<comment type="catalytic activity">
    <reaction evidence="1">
        <text>uridine(1939) in 23S rRNA + S-adenosyl-L-methionine = 5-methyluridine(1939) in 23S rRNA + S-adenosyl-L-homocysteine + H(+)</text>
        <dbReference type="Rhea" id="RHEA:42908"/>
        <dbReference type="Rhea" id="RHEA-COMP:10278"/>
        <dbReference type="Rhea" id="RHEA-COMP:10279"/>
        <dbReference type="ChEBI" id="CHEBI:15378"/>
        <dbReference type="ChEBI" id="CHEBI:57856"/>
        <dbReference type="ChEBI" id="CHEBI:59789"/>
        <dbReference type="ChEBI" id="CHEBI:65315"/>
        <dbReference type="ChEBI" id="CHEBI:74447"/>
        <dbReference type="EC" id="2.1.1.190"/>
    </reaction>
</comment>
<comment type="similarity">
    <text evidence="1">Belongs to the class I-like SAM-binding methyltransferase superfamily. RNA M5U methyltransferase family. RlmD subfamily.</text>
</comment>
<evidence type="ECO:0000255" key="1">
    <source>
        <dbReference type="HAMAP-Rule" id="MF_01010"/>
    </source>
</evidence>
<keyword id="KW-0004">4Fe-4S</keyword>
<keyword id="KW-0408">Iron</keyword>
<keyword id="KW-0411">Iron-sulfur</keyword>
<keyword id="KW-0479">Metal-binding</keyword>
<keyword id="KW-0489">Methyltransferase</keyword>
<keyword id="KW-0698">rRNA processing</keyword>
<keyword id="KW-0949">S-adenosyl-L-methionine</keyword>
<keyword id="KW-0808">Transferase</keyword>
<protein>
    <recommendedName>
        <fullName evidence="1">23S rRNA (uracil(1939)-C(5))-methyltransferase RlmD</fullName>
        <ecNumber evidence="1">2.1.1.190</ecNumber>
    </recommendedName>
    <alternativeName>
        <fullName evidence="1">23S rRNA(m5U1939)-methyltransferase</fullName>
    </alternativeName>
</protein>
<accession>Q87LP5</accession>
<reference key="1">
    <citation type="journal article" date="2003" name="Lancet">
        <title>Genome sequence of Vibrio parahaemolyticus: a pathogenic mechanism distinct from that of V. cholerae.</title>
        <authorList>
            <person name="Makino K."/>
            <person name="Oshima K."/>
            <person name="Kurokawa K."/>
            <person name="Yokoyama K."/>
            <person name="Uda T."/>
            <person name="Tagomori K."/>
            <person name="Iijima Y."/>
            <person name="Najima M."/>
            <person name="Nakano M."/>
            <person name="Yamashita A."/>
            <person name="Kubota Y."/>
            <person name="Kimura S."/>
            <person name="Yasunaga T."/>
            <person name="Honda T."/>
            <person name="Shinagawa H."/>
            <person name="Hattori M."/>
            <person name="Iida T."/>
        </authorList>
    </citation>
    <scope>NUCLEOTIDE SEQUENCE [LARGE SCALE GENOMIC DNA]</scope>
    <source>
        <strain>RIMD 2210633</strain>
    </source>
</reference>
<proteinExistence type="inferred from homology"/>
<organism>
    <name type="scientific">Vibrio parahaemolyticus serotype O3:K6 (strain RIMD 2210633)</name>
    <dbReference type="NCBI Taxonomy" id="223926"/>
    <lineage>
        <taxon>Bacteria</taxon>
        <taxon>Pseudomonadati</taxon>
        <taxon>Pseudomonadota</taxon>
        <taxon>Gammaproteobacteria</taxon>
        <taxon>Vibrionales</taxon>
        <taxon>Vibrionaceae</taxon>
        <taxon>Vibrio</taxon>
    </lineage>
</organism>
<dbReference type="EC" id="2.1.1.190" evidence="1"/>
<dbReference type="EMBL" id="BA000031">
    <property type="protein sequence ID" value="BAC60829.1"/>
    <property type="molecule type" value="Genomic_DNA"/>
</dbReference>
<dbReference type="RefSeq" id="NP_798945.1">
    <property type="nucleotide sequence ID" value="NC_004603.1"/>
</dbReference>
<dbReference type="RefSeq" id="WP_005482575.1">
    <property type="nucleotide sequence ID" value="NC_004603.1"/>
</dbReference>
<dbReference type="SMR" id="Q87LP5"/>
<dbReference type="GeneID" id="1190090"/>
<dbReference type="KEGG" id="vpa:VP2566"/>
<dbReference type="PATRIC" id="fig|223926.6.peg.2464"/>
<dbReference type="eggNOG" id="COG2265">
    <property type="taxonomic scope" value="Bacteria"/>
</dbReference>
<dbReference type="HOGENOM" id="CLU_014689_8_2_6"/>
<dbReference type="Proteomes" id="UP000002493">
    <property type="component" value="Chromosome 1"/>
</dbReference>
<dbReference type="GO" id="GO:0051539">
    <property type="term" value="F:4 iron, 4 sulfur cluster binding"/>
    <property type="evidence" value="ECO:0007669"/>
    <property type="project" value="UniProtKB-KW"/>
</dbReference>
<dbReference type="GO" id="GO:0005506">
    <property type="term" value="F:iron ion binding"/>
    <property type="evidence" value="ECO:0007669"/>
    <property type="project" value="UniProtKB-UniRule"/>
</dbReference>
<dbReference type="GO" id="GO:0003723">
    <property type="term" value="F:RNA binding"/>
    <property type="evidence" value="ECO:0007669"/>
    <property type="project" value="InterPro"/>
</dbReference>
<dbReference type="GO" id="GO:0070041">
    <property type="term" value="F:rRNA (uridine-C5-)-methyltransferase activity"/>
    <property type="evidence" value="ECO:0007669"/>
    <property type="project" value="UniProtKB-UniRule"/>
</dbReference>
<dbReference type="GO" id="GO:0070475">
    <property type="term" value="P:rRNA base methylation"/>
    <property type="evidence" value="ECO:0007669"/>
    <property type="project" value="TreeGrafter"/>
</dbReference>
<dbReference type="CDD" id="cd02440">
    <property type="entry name" value="AdoMet_MTases"/>
    <property type="match status" value="1"/>
</dbReference>
<dbReference type="FunFam" id="3.40.50.150:FF:000009">
    <property type="entry name" value="23S rRNA (Uracil(1939)-C(5))-methyltransferase RlmD"/>
    <property type="match status" value="1"/>
</dbReference>
<dbReference type="FunFam" id="2.40.50.140:FF:000097">
    <property type="entry name" value="23S rRNA (uracil(1939)-C(5))-methyltransferase RlmD"/>
    <property type="match status" value="1"/>
</dbReference>
<dbReference type="Gene3D" id="2.40.50.1070">
    <property type="match status" value="1"/>
</dbReference>
<dbReference type="Gene3D" id="2.40.50.140">
    <property type="entry name" value="Nucleic acid-binding proteins"/>
    <property type="match status" value="1"/>
</dbReference>
<dbReference type="Gene3D" id="3.40.50.150">
    <property type="entry name" value="Vaccinia Virus protein VP39"/>
    <property type="match status" value="1"/>
</dbReference>
<dbReference type="HAMAP" id="MF_01010">
    <property type="entry name" value="23SrRNA_methyltr_RlmD"/>
    <property type="match status" value="1"/>
</dbReference>
<dbReference type="InterPro" id="IPR001566">
    <property type="entry name" value="23S_rRNA_MeTrfase_RlmD"/>
</dbReference>
<dbReference type="InterPro" id="IPR030390">
    <property type="entry name" value="MeTrfase_TrmA_AS"/>
</dbReference>
<dbReference type="InterPro" id="IPR030391">
    <property type="entry name" value="MeTrfase_TrmA_CS"/>
</dbReference>
<dbReference type="InterPro" id="IPR012340">
    <property type="entry name" value="NA-bd_OB-fold"/>
</dbReference>
<dbReference type="InterPro" id="IPR029063">
    <property type="entry name" value="SAM-dependent_MTases_sf"/>
</dbReference>
<dbReference type="InterPro" id="IPR002792">
    <property type="entry name" value="TRAM_dom"/>
</dbReference>
<dbReference type="InterPro" id="IPR010280">
    <property type="entry name" value="U5_MeTrfase_fam"/>
</dbReference>
<dbReference type="NCBIfam" id="NF009639">
    <property type="entry name" value="PRK13168.1"/>
    <property type="match status" value="1"/>
</dbReference>
<dbReference type="NCBIfam" id="TIGR00479">
    <property type="entry name" value="rumA"/>
    <property type="match status" value="1"/>
</dbReference>
<dbReference type="PANTHER" id="PTHR11061:SF49">
    <property type="entry name" value="23S RRNA (URACIL(1939)-C(5))-METHYLTRANSFERASE RLMD"/>
    <property type="match status" value="1"/>
</dbReference>
<dbReference type="PANTHER" id="PTHR11061">
    <property type="entry name" value="RNA M5U METHYLTRANSFERASE"/>
    <property type="match status" value="1"/>
</dbReference>
<dbReference type="Pfam" id="PF01938">
    <property type="entry name" value="TRAM"/>
    <property type="match status" value="1"/>
</dbReference>
<dbReference type="Pfam" id="PF05958">
    <property type="entry name" value="tRNA_U5-meth_tr"/>
    <property type="match status" value="1"/>
</dbReference>
<dbReference type="SUPFAM" id="SSF50249">
    <property type="entry name" value="Nucleic acid-binding proteins"/>
    <property type="match status" value="1"/>
</dbReference>
<dbReference type="SUPFAM" id="SSF53335">
    <property type="entry name" value="S-adenosyl-L-methionine-dependent methyltransferases"/>
    <property type="match status" value="1"/>
</dbReference>
<dbReference type="PROSITE" id="PS51687">
    <property type="entry name" value="SAM_MT_RNA_M5U"/>
    <property type="match status" value="1"/>
</dbReference>
<dbReference type="PROSITE" id="PS50926">
    <property type="entry name" value="TRAM"/>
    <property type="match status" value="1"/>
</dbReference>
<dbReference type="PROSITE" id="PS01230">
    <property type="entry name" value="TRMA_1"/>
    <property type="match status" value="1"/>
</dbReference>
<dbReference type="PROSITE" id="PS01231">
    <property type="entry name" value="TRMA_2"/>
    <property type="match status" value="1"/>
</dbReference>
<name>RLMD_VIBPA</name>
<gene>
    <name evidence="1" type="primary">rlmD</name>
    <name type="synonym">rumA</name>
    <name type="ordered locus">VP2566</name>
</gene>
<feature type="chain" id="PRO_0000161917" description="23S rRNA (uracil(1939)-C(5))-methyltransferase RlmD">
    <location>
        <begin position="1"/>
        <end position="439"/>
    </location>
</feature>
<feature type="domain" description="TRAM" evidence="1">
    <location>
        <begin position="10"/>
        <end position="69"/>
    </location>
</feature>
<feature type="active site" description="Nucleophile" evidence="1">
    <location>
        <position position="396"/>
    </location>
</feature>
<feature type="binding site" evidence="1">
    <location>
        <position position="82"/>
    </location>
    <ligand>
        <name>[4Fe-4S] cluster</name>
        <dbReference type="ChEBI" id="CHEBI:49883"/>
    </ligand>
</feature>
<feature type="binding site" evidence="1">
    <location>
        <position position="88"/>
    </location>
    <ligand>
        <name>[4Fe-4S] cluster</name>
        <dbReference type="ChEBI" id="CHEBI:49883"/>
    </ligand>
</feature>
<feature type="binding site" evidence="1">
    <location>
        <position position="91"/>
    </location>
    <ligand>
        <name>[4Fe-4S] cluster</name>
        <dbReference type="ChEBI" id="CHEBI:49883"/>
    </ligand>
</feature>
<feature type="binding site" evidence="1">
    <location>
        <position position="169"/>
    </location>
    <ligand>
        <name>[4Fe-4S] cluster</name>
        <dbReference type="ChEBI" id="CHEBI:49883"/>
    </ligand>
</feature>
<feature type="binding site" evidence="1">
    <location>
        <position position="272"/>
    </location>
    <ligand>
        <name>S-adenosyl-L-methionine</name>
        <dbReference type="ChEBI" id="CHEBI:59789"/>
    </ligand>
</feature>
<feature type="binding site" evidence="1">
    <location>
        <position position="301"/>
    </location>
    <ligand>
        <name>S-adenosyl-L-methionine</name>
        <dbReference type="ChEBI" id="CHEBI:59789"/>
    </ligand>
</feature>
<feature type="binding site" evidence="1">
    <location>
        <position position="306"/>
    </location>
    <ligand>
        <name>S-adenosyl-L-methionine</name>
        <dbReference type="ChEBI" id="CHEBI:59789"/>
    </ligand>
</feature>
<feature type="binding site" evidence="1">
    <location>
        <position position="322"/>
    </location>
    <ligand>
        <name>S-adenosyl-L-methionine</name>
        <dbReference type="ChEBI" id="CHEBI:59789"/>
    </ligand>
</feature>
<feature type="binding site" evidence="1">
    <location>
        <position position="349"/>
    </location>
    <ligand>
        <name>S-adenosyl-L-methionine</name>
        <dbReference type="ChEBI" id="CHEBI:59789"/>
    </ligand>
</feature>
<feature type="binding site" evidence="1">
    <location>
        <position position="370"/>
    </location>
    <ligand>
        <name>S-adenosyl-L-methionine</name>
        <dbReference type="ChEBI" id="CHEBI:59789"/>
    </ligand>
</feature>
<sequence>MARIFQPKKKTQLNTRHQAVQVERLDHHGAGIAYLKKKPLFIDGALPGEEVVTQLVEEKSKFARGKLIKILKPSDARVEPFCPHYHECGGCDLQHLNYDQQLTHKQQTLRQLMRKFAGSDIDLDAPVLGESLGYRRRARVSLFVDKKTRQLHFGFRKKQSKQIAQVTDCPVLAPELNVLLPEIYSVLKAFKKPDQLGHVELVLGDNGPCITLRHLSNLADDEVSALVELATRHQASLYLMPETDQLNLVAGEVPFYQEAGVKIPFDPNNFIQVNQAVNQKMVEQAIKWLDPQSDERVLDLFCGLGNFSLPIAKRAKHVVGVEGVAEMVEKASNNASLNQINNAQFYHANLEQDFDGQAWAAEKFDKVLLDPARAGASGIIDQVSALGAQRVVYVSCNPATLARDSQSLLDQGYQLTKLGMLDMFPHTSHLESMALFEKS</sequence>